<reference key="1">
    <citation type="journal article" date="2002" name="Proc. Natl. Acad. Sci. U.S.A.">
        <title>Characterization of an orphan G protein-coupled receptor localized in the dorsal root ganglia reveals adenine as a signaling molecule.</title>
        <authorList>
            <person name="Bender E."/>
            <person name="Buist A."/>
            <person name="Jurzak M."/>
            <person name="Langlois X."/>
            <person name="Baggerman G."/>
            <person name="Verhasselt P."/>
            <person name="Ercken M."/>
            <person name="Guo H.-Q."/>
            <person name="Wintmolders C."/>
            <person name="Van den Wyngaert I."/>
            <person name="Van Oers I."/>
            <person name="Schoofs L."/>
            <person name="Luyten W."/>
        </authorList>
    </citation>
    <scope>NUCLEOTIDE SEQUENCE [MRNA]</scope>
</reference>
<reference key="2">
    <citation type="journal article" date="2003" name="Proc. Natl. Acad. Sci. U.S.A.">
        <title>Atypical expansion in mice of the sensory neuron-specific Mrg G protein-coupled receptor family.</title>
        <authorList>
            <person name="Zylka M.J."/>
            <person name="Dong X."/>
            <person name="Southwell A.L."/>
            <person name="Anderson D.J."/>
        </authorList>
    </citation>
    <scope>NUCLEOTIDE SEQUENCE [GENOMIC DNA]</scope>
    <scope>TISSUE SPECIFICITY</scope>
    <source>
        <strain>Sprague-Dawley</strain>
    </source>
</reference>
<reference key="3">
    <citation type="journal article" date="2004" name="Genome Res.">
        <title>The status, quality, and expansion of the NIH full-length cDNA project: the Mammalian Gene Collection (MGC).</title>
        <authorList>
            <consortium name="The MGC Project Team"/>
        </authorList>
    </citation>
    <scope>NUCLEOTIDE SEQUENCE [LARGE SCALE MRNA]</scope>
    <source>
        <tissue>Liver</tissue>
    </source>
</reference>
<comment type="function">
    <text evidence="1">Orphan receptor activated by a subset of RFamide-family neuropeptides such as FLRF-amide and FMRF-amide. Mediates its action by association with G proteins that activate a phosphatidylinositol-calcium second messenger system. Its effect is mediated by G(q) and G(11) proteins. May regulate the function of nociceptive neurons by modulation of pain perception (By similarity).</text>
</comment>
<comment type="subcellular location">
    <subcellularLocation>
        <location>Cell membrane</location>
        <topology>Multi-pass membrane protein</topology>
    </subcellularLocation>
</comment>
<comment type="tissue specificity">
    <text evidence="4">Expressed in a subset of IB4-positive small diameter nociceptive dorsal root neurons.</text>
</comment>
<comment type="similarity">
    <text evidence="3">Belongs to the G-protein coupled receptor 1 family. Mas subfamily.</text>
</comment>
<comment type="caution">
    <text evidence="6">Was originally thought to be an adenine receptor but PubMed:12397184 found no activation by adenine of the mouse ortholog.</text>
</comment>
<comment type="sequence caution" evidence="5">
    <conflict type="erroneous initiation">
        <sequence resource="EMBL-CDS" id="AAH89774"/>
    </conflict>
</comment>
<comment type="sequence caution" evidence="5">
    <conflict type="erroneous initiation">
        <sequence resource="EMBL-CDS" id="CAC84592"/>
    </conflict>
</comment>
<evidence type="ECO:0000250" key="1"/>
<evidence type="ECO:0000255" key="2"/>
<evidence type="ECO:0000255" key="3">
    <source>
        <dbReference type="PROSITE-ProRule" id="PRU00521"/>
    </source>
</evidence>
<evidence type="ECO:0000269" key="4">
    <source>
    </source>
</evidence>
<evidence type="ECO:0000305" key="5"/>
<evidence type="ECO:0000305" key="6">
    <source>
    </source>
</evidence>
<sequence>MDKTIPGSFNSRTLIPNLLIIISGLVGLIGNAMVFWLLGFRLARNAFSVYILNLALADFLFLLCHIIDSTLLLLKFSYPNIIFLPCFNTVMMVPYIAGLSMLSAISTERCLSVVCPIWYRCRRPKHTSTVMCSAIWVLSLLICILNRYFCGFLDTKYEKDNRCLASNFFTAACLIFLFVVLCLSSLALLVRLFCGAGRMKLTRLYATIMLTVLVFLLCGLPFGIHWFLLIWIKIDYGKFAYGLYLAALVLTAVNSCANPIIYFFVGSFRHQKHQTLKMVLQRALQDTPETAENTVEMSSSKVEP</sequence>
<organism>
    <name type="scientific">Rattus norvegicus</name>
    <name type="common">Rat</name>
    <dbReference type="NCBI Taxonomy" id="10116"/>
    <lineage>
        <taxon>Eukaryota</taxon>
        <taxon>Metazoa</taxon>
        <taxon>Chordata</taxon>
        <taxon>Craniata</taxon>
        <taxon>Vertebrata</taxon>
        <taxon>Euteleostomi</taxon>
        <taxon>Mammalia</taxon>
        <taxon>Eutheria</taxon>
        <taxon>Euarchontoglires</taxon>
        <taxon>Glires</taxon>
        <taxon>Rodentia</taxon>
        <taxon>Myomorpha</taxon>
        <taxon>Muroidea</taxon>
        <taxon>Muridae</taxon>
        <taxon>Murinae</taxon>
        <taxon>Rattus</taxon>
    </lineage>
</organism>
<keyword id="KW-1003">Cell membrane</keyword>
<keyword id="KW-0297">G-protein coupled receptor</keyword>
<keyword id="KW-0472">Membrane</keyword>
<keyword id="KW-0675">Receptor</keyword>
<keyword id="KW-1185">Reference proteome</keyword>
<keyword id="KW-0807">Transducer</keyword>
<keyword id="KW-0812">Transmembrane</keyword>
<keyword id="KW-1133">Transmembrane helix</keyword>
<protein>
    <recommendedName>
        <fullName>Mas-related G-protein coupled receptor member A</fullName>
    </recommendedName>
</protein>
<proteinExistence type="evidence at transcript level"/>
<dbReference type="EMBL" id="AJ311952">
    <property type="protein sequence ID" value="CAC84592.1"/>
    <property type="status" value="ALT_INIT"/>
    <property type="molecule type" value="mRNA"/>
</dbReference>
<dbReference type="EMBL" id="AF518238">
    <property type="protein sequence ID" value="AAQ08310.1"/>
    <property type="molecule type" value="Genomic_DNA"/>
</dbReference>
<dbReference type="EMBL" id="BC089774">
    <property type="protein sequence ID" value="AAH89774.1"/>
    <property type="status" value="ALT_INIT"/>
    <property type="molecule type" value="mRNA"/>
</dbReference>
<dbReference type="RefSeq" id="NP_665730.2">
    <property type="nucleotide sequence ID" value="NM_145787.2"/>
</dbReference>
<dbReference type="SMR" id="Q7TN49"/>
<dbReference type="FunCoup" id="Q7TN49">
    <property type="interactions" value="34"/>
</dbReference>
<dbReference type="STRING" id="10116.ENSRNOP00000019051"/>
<dbReference type="PaxDb" id="10116-ENSRNOP00000019051"/>
<dbReference type="GeneID" id="252960"/>
<dbReference type="KEGG" id="rno:252960"/>
<dbReference type="AGR" id="RGD:632282"/>
<dbReference type="CTD" id="117195"/>
<dbReference type="RGD" id="738050">
    <property type="gene designation" value="Mrgpra"/>
</dbReference>
<dbReference type="eggNOG" id="ENOG502RTWA">
    <property type="taxonomic scope" value="Eukaryota"/>
</dbReference>
<dbReference type="HOGENOM" id="CLU_009579_4_1_1"/>
<dbReference type="InParanoid" id="Q7TN49"/>
<dbReference type="OrthoDB" id="81792at9989"/>
<dbReference type="PhylomeDB" id="Q7TN49"/>
<dbReference type="TreeFam" id="TF336336"/>
<dbReference type="PRO" id="PR:Q7TN49"/>
<dbReference type="Proteomes" id="UP000002494">
    <property type="component" value="Unplaced"/>
</dbReference>
<dbReference type="GO" id="GO:0005886">
    <property type="term" value="C:plasma membrane"/>
    <property type="evidence" value="ECO:0000318"/>
    <property type="project" value="GO_Central"/>
</dbReference>
<dbReference type="GO" id="GO:0004930">
    <property type="term" value="F:G protein-coupled receptor activity"/>
    <property type="evidence" value="ECO:0000318"/>
    <property type="project" value="GO_Central"/>
</dbReference>
<dbReference type="GO" id="GO:0007186">
    <property type="term" value="P:G protein-coupled receptor signaling pathway"/>
    <property type="evidence" value="ECO:0000318"/>
    <property type="project" value="GO_Central"/>
</dbReference>
<dbReference type="CDD" id="cd15105">
    <property type="entry name" value="7tmA_MrgprA"/>
    <property type="match status" value="1"/>
</dbReference>
<dbReference type="FunFam" id="1.20.1070.10:FF:000140">
    <property type="entry name" value="Mas-related G-protein coupled receptor member X2"/>
    <property type="match status" value="1"/>
</dbReference>
<dbReference type="Gene3D" id="1.20.1070.10">
    <property type="entry name" value="Rhodopsin 7-helix transmembrane proteins"/>
    <property type="match status" value="1"/>
</dbReference>
<dbReference type="InterPro" id="IPR000276">
    <property type="entry name" value="GPCR_Rhodpsn"/>
</dbReference>
<dbReference type="InterPro" id="IPR017452">
    <property type="entry name" value="GPCR_Rhodpsn_7TM"/>
</dbReference>
<dbReference type="InterPro" id="IPR026233">
    <property type="entry name" value="MRGPCRA"/>
</dbReference>
<dbReference type="InterPro" id="IPR026234">
    <property type="entry name" value="MRGPCRFAMILY"/>
</dbReference>
<dbReference type="PANTHER" id="PTHR11334">
    <property type="entry name" value="MAS-RELATED G-PROTEIN COUPLED RECEPTOR"/>
    <property type="match status" value="1"/>
</dbReference>
<dbReference type="PANTHER" id="PTHR11334:SF33">
    <property type="entry name" value="MAS-RELATED GPR, MEMBER A2A-RELATED"/>
    <property type="match status" value="1"/>
</dbReference>
<dbReference type="Pfam" id="PF00001">
    <property type="entry name" value="7tm_1"/>
    <property type="match status" value="1"/>
</dbReference>
<dbReference type="PRINTS" id="PR00237">
    <property type="entry name" value="GPCRRHODOPSN"/>
</dbReference>
<dbReference type="PRINTS" id="PR02109">
    <property type="entry name" value="MRGPCRA"/>
</dbReference>
<dbReference type="PRINTS" id="PR02108">
    <property type="entry name" value="MRGPCRFAMILY"/>
</dbReference>
<dbReference type="SUPFAM" id="SSF81321">
    <property type="entry name" value="Family A G protein-coupled receptor-like"/>
    <property type="match status" value="1"/>
</dbReference>
<dbReference type="PROSITE" id="PS00237">
    <property type="entry name" value="G_PROTEIN_RECEP_F1_1"/>
    <property type="match status" value="1"/>
</dbReference>
<dbReference type="PROSITE" id="PS50262">
    <property type="entry name" value="G_PROTEIN_RECEP_F1_2"/>
    <property type="match status" value="1"/>
</dbReference>
<accession>Q7TN49</accession>
<accession>Q5FVU1</accession>
<accession>Q91YB7</accession>
<gene>
    <name type="primary">Mrgpra</name>
    <name type="synonym">Mrga</name>
</gene>
<name>MRGRA_RAT</name>
<feature type="chain" id="PRO_0000069755" description="Mas-related G-protein coupled receptor member A">
    <location>
        <begin position="1"/>
        <end position="304"/>
    </location>
</feature>
<feature type="topological domain" description="Extracellular" evidence="2">
    <location>
        <begin position="1"/>
        <end position="17"/>
    </location>
</feature>
<feature type="transmembrane region" description="Helical; Name=1" evidence="2">
    <location>
        <begin position="18"/>
        <end position="38"/>
    </location>
</feature>
<feature type="topological domain" description="Cytoplasmic" evidence="2">
    <location>
        <begin position="39"/>
        <end position="46"/>
    </location>
</feature>
<feature type="transmembrane region" description="Helical; Name=2" evidence="2">
    <location>
        <begin position="47"/>
        <end position="67"/>
    </location>
</feature>
<feature type="topological domain" description="Extracellular" evidence="2">
    <location>
        <begin position="68"/>
        <end position="80"/>
    </location>
</feature>
<feature type="transmembrane region" description="Helical; Name=3" evidence="2">
    <location>
        <begin position="81"/>
        <end position="101"/>
    </location>
</feature>
<feature type="topological domain" description="Cytoplasmic" evidence="2">
    <location>
        <begin position="102"/>
        <end position="132"/>
    </location>
</feature>
<feature type="transmembrane region" description="Helical; Name=4" evidence="2">
    <location>
        <begin position="133"/>
        <end position="153"/>
    </location>
</feature>
<feature type="topological domain" description="Extracellular" evidence="2">
    <location>
        <begin position="154"/>
        <end position="167"/>
    </location>
</feature>
<feature type="transmembrane region" description="Helical; Name=5" evidence="2">
    <location>
        <begin position="168"/>
        <end position="188"/>
    </location>
</feature>
<feature type="topological domain" description="Cytoplasmic" evidence="2">
    <location>
        <begin position="189"/>
        <end position="211"/>
    </location>
</feature>
<feature type="transmembrane region" description="Helical; Name=6" evidence="2">
    <location>
        <begin position="212"/>
        <end position="232"/>
    </location>
</feature>
<feature type="topological domain" description="Extracellular" evidence="2">
    <location>
        <begin position="233"/>
        <end position="244"/>
    </location>
</feature>
<feature type="transmembrane region" description="Helical; Name=7" evidence="2">
    <location>
        <begin position="245"/>
        <end position="265"/>
    </location>
</feature>
<feature type="topological domain" description="Cytoplasmic" evidence="2">
    <location>
        <begin position="266"/>
        <end position="304"/>
    </location>
</feature>
<feature type="sequence conflict" description="In Ref. 1; CAC84592." evidence="5" ref="1">
    <original>S</original>
    <variation>G</variation>
    <location>
        <position position="11"/>
    </location>
</feature>
<feature type="sequence conflict" description="In Ref. 2; AAQ08310." evidence="5" ref="2">
    <original>I</original>
    <variation>T</variation>
    <location>
        <position position="29"/>
    </location>
</feature>
<feature type="sequence conflict" description="In Ref. 1; CAC84592." evidence="5" ref="1">
    <original>L</original>
    <variation>S</variation>
    <location>
        <position position="192"/>
    </location>
</feature>